<name>M1_I03A1</name>
<keyword id="KW-0025">Alternative splicing</keyword>
<keyword id="KW-1048">Host nucleus</keyword>
<keyword id="KW-0472">Membrane</keyword>
<keyword id="KW-0694">RNA-binding</keyword>
<keyword id="KW-0468">Viral matrix protein</keyword>
<keyword id="KW-0946">Virion</keyword>
<protein>
    <recommendedName>
        <fullName evidence="1">Matrix protein 1</fullName>
        <shortName evidence="1">M1</shortName>
    </recommendedName>
</protein>
<feature type="chain" id="PRO_0000311619" description="Matrix protein 1">
    <location>
        <begin position="1"/>
        <end position="252"/>
    </location>
</feature>
<feature type="region of interest" description="Membrane-binding" evidence="1">
    <location>
        <begin position="1"/>
        <end position="164"/>
    </location>
</feature>
<feature type="region of interest" description="RNP-binding" evidence="1">
    <location>
        <begin position="165"/>
        <end position="252"/>
    </location>
</feature>
<feature type="short sequence motif" description="Nuclear localization signal" evidence="1">
    <location>
        <begin position="101"/>
        <end position="105"/>
    </location>
</feature>
<reference key="1">
    <citation type="journal article" date="2004" name="Nature">
        <title>Genesis of a highly pathogenic and potentially pandemic H5N1 influenza virus in eastern Asia.</title>
        <authorList>
            <person name="Li K.S."/>
            <person name="Guan Y."/>
            <person name="Wang J."/>
            <person name="Smith G.J.D."/>
            <person name="Xu K.M."/>
            <person name="Duan L."/>
            <person name="Rahardjo A.P."/>
            <person name="Puthavathana P."/>
            <person name="Buranathai C."/>
            <person name="Nguyen T.D."/>
            <person name="Estoepangestie A.T.S."/>
            <person name="Chaisingh A."/>
            <person name="Auewarakul P."/>
            <person name="Long H.T."/>
            <person name="Hanh N.T.H."/>
            <person name="Webby R.J."/>
            <person name="Poon L.L.M."/>
            <person name="Chen H."/>
            <person name="Shortridge K.F."/>
            <person name="Yuen K.Y."/>
            <person name="Webster R.G."/>
            <person name="Peiris J.S.M."/>
        </authorList>
    </citation>
    <scope>NUCLEOTIDE SEQUENCE [GENOMIC RNA]</scope>
</reference>
<accession>Q6DPQ0</accession>
<sequence>MSLLTEVETYVLSIIPSGPLKAEIAQKLEDVFAGKNADLEALMEWLKTRPILSPLTKGILGFVFTLTVPSERGLQRRRFVQNALNGNGDPNNMDRAVKLYKKLKREITFHGAKEVALSYSTGALASCMGLIYNRMGTVTTEVAFGLVCATCEQIADSQHRSHRQMATITNPLIRHENRMVLASTTAKAMEQMAGSSEQAAEAMEVANQARQMVQAMRTIGTHPNSSAGLRDNLLENLQAYQKRMGVQMQRFK</sequence>
<organismHost>
    <name type="scientific">Aves</name>
    <dbReference type="NCBI Taxonomy" id="8782"/>
</organismHost>
<organismHost>
    <name type="scientific">Felis catus</name>
    <name type="common">Cat</name>
    <name type="synonym">Felis silvestris catus</name>
    <dbReference type="NCBI Taxonomy" id="9685"/>
</organismHost>
<organismHost>
    <name type="scientific">Homo sapiens</name>
    <name type="common">Human</name>
    <dbReference type="NCBI Taxonomy" id="9606"/>
</organismHost>
<organismHost>
    <name type="scientific">Panthera pardus</name>
    <name type="common">Leopard</name>
    <name type="synonym">Felis pardus</name>
    <dbReference type="NCBI Taxonomy" id="9691"/>
</organismHost>
<organismHost>
    <name type="scientific">Panthera tigris</name>
    <name type="common">Tiger</name>
    <dbReference type="NCBI Taxonomy" id="9694"/>
</organismHost>
<organismHost>
    <name type="scientific">Sus scrofa</name>
    <name type="common">Pig</name>
    <dbReference type="NCBI Taxonomy" id="9823"/>
</organismHost>
<dbReference type="EMBL" id="AY651420">
    <property type="protein sequence ID" value="AAT70593.1"/>
    <property type="molecule type" value="Genomic_RNA"/>
</dbReference>
<dbReference type="SMR" id="Q6DPQ0"/>
<dbReference type="GO" id="GO:0042025">
    <property type="term" value="C:host cell nucleus"/>
    <property type="evidence" value="ECO:0007669"/>
    <property type="project" value="UniProtKB-SubCell"/>
</dbReference>
<dbReference type="GO" id="GO:0016020">
    <property type="term" value="C:membrane"/>
    <property type="evidence" value="ECO:0007669"/>
    <property type="project" value="UniProtKB-KW"/>
</dbReference>
<dbReference type="GO" id="GO:0055036">
    <property type="term" value="C:virion membrane"/>
    <property type="evidence" value="ECO:0007669"/>
    <property type="project" value="UniProtKB-SubCell"/>
</dbReference>
<dbReference type="GO" id="GO:0003723">
    <property type="term" value="F:RNA binding"/>
    <property type="evidence" value="ECO:0007669"/>
    <property type="project" value="UniProtKB-UniRule"/>
</dbReference>
<dbReference type="GO" id="GO:0039660">
    <property type="term" value="F:structural constituent of virion"/>
    <property type="evidence" value="ECO:0007669"/>
    <property type="project" value="UniProtKB-UniRule"/>
</dbReference>
<dbReference type="GO" id="GO:0046761">
    <property type="term" value="P:viral budding from plasma membrane"/>
    <property type="evidence" value="ECO:0007669"/>
    <property type="project" value="UniProtKB-UniRule"/>
</dbReference>
<dbReference type="FunFam" id="1.10.10.180:FF:000001">
    <property type="entry name" value="Matrix protein 1"/>
    <property type="match status" value="1"/>
</dbReference>
<dbReference type="FunFam" id="1.20.91.10:FF:000001">
    <property type="entry name" value="Matrix protein 1"/>
    <property type="match status" value="1"/>
</dbReference>
<dbReference type="Gene3D" id="1.10.10.180">
    <property type="match status" value="1"/>
</dbReference>
<dbReference type="Gene3D" id="1.20.91.10">
    <property type="match status" value="1"/>
</dbReference>
<dbReference type="HAMAP" id="MF_04068">
    <property type="entry name" value="INFV_M1"/>
    <property type="match status" value="1"/>
</dbReference>
<dbReference type="InterPro" id="IPR036039">
    <property type="entry name" value="Flu_matrix_M1"/>
</dbReference>
<dbReference type="InterPro" id="IPR013188">
    <property type="entry name" value="Flu_matrix_M1_C"/>
</dbReference>
<dbReference type="InterPro" id="IPR001561">
    <property type="entry name" value="Flu_matrix_M1_N"/>
</dbReference>
<dbReference type="InterPro" id="IPR015423">
    <property type="entry name" value="Flu_matrix_M1_N_sub1"/>
</dbReference>
<dbReference type="InterPro" id="IPR015799">
    <property type="entry name" value="Flu_matrix_M1_N_sub2"/>
</dbReference>
<dbReference type="InterPro" id="IPR037533">
    <property type="entry name" value="INFV_M1"/>
</dbReference>
<dbReference type="Pfam" id="PF00598">
    <property type="entry name" value="Flu_M1"/>
    <property type="match status" value="1"/>
</dbReference>
<dbReference type="Pfam" id="PF08289">
    <property type="entry name" value="Flu_M1_C"/>
    <property type="match status" value="1"/>
</dbReference>
<dbReference type="SMART" id="SM00759">
    <property type="entry name" value="Flu_M1_C"/>
    <property type="match status" value="1"/>
</dbReference>
<dbReference type="SUPFAM" id="SSF48145">
    <property type="entry name" value="Influenza virus matrix protein M1"/>
    <property type="match status" value="1"/>
</dbReference>
<comment type="function">
    <text evidence="1">Plays critical roles in virus replication, from virus entry and uncoating to assembly and budding of the virus particle. M1 binding to ribonucleocapsids (RNPs) in nucleus seems to inhibit viral transcription. Interaction of viral NEP with M1-RNP is thought to promote nuclear export of the complex, which is targeted to the virion assembly site at the apical plasma membrane in polarized epithelial cells. Interactions with NA and HA may bring M1, a non-raft-associated protein, into lipid rafts. Forms a continuous shell on the inner side of the lipid bilayer in virion, where it binds the RNP. During virus entry into cell, the M2 ion channel acidifies the internal virion core, inducing M1 dissociation from the RNP. M1-free RNPs are transported to the nucleus, where viral transcription and replication can take place.</text>
</comment>
<comment type="function">
    <text evidence="1">Determines the virion's shape: spherical or filamentous. Clinical isolates of influenza are characterized by the presence of significant proportion of filamentous virions, whereas after multiple passage on eggs or cell culture, virions have only spherical morphology. Filamentous virions are thought to be important to infect neighboring cells, and spherical virions more suited to spread through aerosol between hosts organisms.</text>
</comment>
<comment type="subunit">
    <text evidence="1">Homodimer and homomultimer. Interacts with NEP. Binds ribonucleocapsid by both interacting with genomic RNA and NP protein. May interact with HA and NA. Cannot bind NP without genomic RNA.</text>
</comment>
<comment type="subcellular location">
    <subcellularLocation>
        <location evidence="1">Virion membrane</location>
        <topology evidence="1">Peripheral membrane protein</topology>
        <orientation evidence="1">Cytoplasmic side</orientation>
    </subcellularLocation>
    <subcellularLocation>
        <location evidence="1">Host nucleus</location>
    </subcellularLocation>
</comment>
<comment type="alternative products">
    <event type="alternative splicing"/>
    <isoform>
        <id>Q6DPQ0-1</id>
        <name>M1</name>
        <sequence type="displayed"/>
    </isoform>
    <isoform>
        <id>Q6DPQ1-1</id>
        <name>M2</name>
        <sequence type="external"/>
    </isoform>
    <text>Only the first 9 residues are shared by the 2 isoforms.</text>
</comment>
<comment type="miscellaneous">
    <text evidence="1">Most abundant protein in virion. When expressed alone can form virus-like particles in transfected cells.</text>
</comment>
<comment type="similarity">
    <text evidence="1">Belongs to the influenza viruses Matrix protein M1 family.</text>
</comment>
<proteinExistence type="inferred from homology"/>
<gene>
    <name evidence="1" type="primary">M</name>
</gene>
<organism>
    <name type="scientific">Influenza A virus (strain A/Chicken/Shantou/4231/2003 H5N1 genotype V)</name>
    <dbReference type="NCBI Taxonomy" id="284184"/>
    <lineage>
        <taxon>Viruses</taxon>
        <taxon>Riboviria</taxon>
        <taxon>Orthornavirae</taxon>
        <taxon>Negarnaviricota</taxon>
        <taxon>Polyploviricotina</taxon>
        <taxon>Insthoviricetes</taxon>
        <taxon>Articulavirales</taxon>
        <taxon>Orthomyxoviridae</taxon>
        <taxon>Alphainfluenzavirus</taxon>
        <taxon>Alphainfluenzavirus influenzae</taxon>
        <taxon>Influenza A virus</taxon>
    </lineage>
</organism>
<evidence type="ECO:0000255" key="1">
    <source>
        <dbReference type="HAMAP-Rule" id="MF_04068"/>
    </source>
</evidence>